<organism>
    <name type="scientific">Wolbachia sp. subsp. Drosophila simulans (strain wRi)</name>
    <dbReference type="NCBI Taxonomy" id="66084"/>
    <lineage>
        <taxon>Bacteria</taxon>
        <taxon>Pseudomonadati</taxon>
        <taxon>Pseudomonadota</taxon>
        <taxon>Alphaproteobacteria</taxon>
        <taxon>Rickettsiales</taxon>
        <taxon>Anaplasmataceae</taxon>
        <taxon>Wolbachieae</taxon>
        <taxon>Wolbachia</taxon>
    </lineage>
</organism>
<name>DEF_WOLWR</name>
<evidence type="ECO:0000255" key="1">
    <source>
        <dbReference type="HAMAP-Rule" id="MF_00163"/>
    </source>
</evidence>
<keyword id="KW-0378">Hydrolase</keyword>
<keyword id="KW-0408">Iron</keyword>
<keyword id="KW-0479">Metal-binding</keyword>
<keyword id="KW-0648">Protein biosynthesis</keyword>
<protein>
    <recommendedName>
        <fullName evidence="1">Peptide deformylase</fullName>
        <shortName evidence="1">PDF</shortName>
        <ecNumber evidence="1">3.5.1.88</ecNumber>
    </recommendedName>
    <alternativeName>
        <fullName evidence="1">Polypeptide deformylase</fullName>
    </alternativeName>
</protein>
<feature type="chain" id="PRO_1000123549" description="Peptide deformylase">
    <location>
        <begin position="1"/>
        <end position="179"/>
    </location>
</feature>
<feature type="active site" evidence="1">
    <location>
        <position position="145"/>
    </location>
</feature>
<feature type="binding site" evidence="1">
    <location>
        <position position="102"/>
    </location>
    <ligand>
        <name>Fe cation</name>
        <dbReference type="ChEBI" id="CHEBI:24875"/>
    </ligand>
</feature>
<feature type="binding site" evidence="1">
    <location>
        <position position="144"/>
    </location>
    <ligand>
        <name>Fe cation</name>
        <dbReference type="ChEBI" id="CHEBI:24875"/>
    </ligand>
</feature>
<feature type="binding site" evidence="1">
    <location>
        <position position="148"/>
    </location>
    <ligand>
        <name>Fe cation</name>
        <dbReference type="ChEBI" id="CHEBI:24875"/>
    </ligand>
</feature>
<proteinExistence type="inferred from homology"/>
<accession>C0R5A2</accession>
<dbReference type="EC" id="3.5.1.88" evidence="1"/>
<dbReference type="EMBL" id="CP001391">
    <property type="protein sequence ID" value="ACN94944.1"/>
    <property type="molecule type" value="Genomic_DNA"/>
</dbReference>
<dbReference type="RefSeq" id="WP_006280370.1">
    <property type="nucleotide sequence ID" value="NZ_MKIF01000035.1"/>
</dbReference>
<dbReference type="SMR" id="C0R5A2"/>
<dbReference type="STRING" id="66084.WRi_000890"/>
<dbReference type="KEGG" id="wri:WRi_000890"/>
<dbReference type="HOGENOM" id="CLU_061901_2_2_5"/>
<dbReference type="Proteomes" id="UP000001293">
    <property type="component" value="Chromosome"/>
</dbReference>
<dbReference type="GO" id="GO:0046872">
    <property type="term" value="F:metal ion binding"/>
    <property type="evidence" value="ECO:0007669"/>
    <property type="project" value="UniProtKB-KW"/>
</dbReference>
<dbReference type="GO" id="GO:0042586">
    <property type="term" value="F:peptide deformylase activity"/>
    <property type="evidence" value="ECO:0007669"/>
    <property type="project" value="UniProtKB-UniRule"/>
</dbReference>
<dbReference type="GO" id="GO:0006412">
    <property type="term" value="P:translation"/>
    <property type="evidence" value="ECO:0007669"/>
    <property type="project" value="UniProtKB-UniRule"/>
</dbReference>
<dbReference type="CDD" id="cd00487">
    <property type="entry name" value="Pep_deformylase"/>
    <property type="match status" value="1"/>
</dbReference>
<dbReference type="Gene3D" id="3.90.45.10">
    <property type="entry name" value="Peptide deformylase"/>
    <property type="match status" value="1"/>
</dbReference>
<dbReference type="HAMAP" id="MF_00163">
    <property type="entry name" value="Pep_deformylase"/>
    <property type="match status" value="1"/>
</dbReference>
<dbReference type="InterPro" id="IPR023635">
    <property type="entry name" value="Peptide_deformylase"/>
</dbReference>
<dbReference type="InterPro" id="IPR036821">
    <property type="entry name" value="Peptide_deformylase_sf"/>
</dbReference>
<dbReference type="NCBIfam" id="TIGR00079">
    <property type="entry name" value="pept_deformyl"/>
    <property type="match status" value="1"/>
</dbReference>
<dbReference type="NCBIfam" id="NF001159">
    <property type="entry name" value="PRK00150.1-3"/>
    <property type="match status" value="1"/>
</dbReference>
<dbReference type="PANTHER" id="PTHR10458">
    <property type="entry name" value="PEPTIDE DEFORMYLASE"/>
    <property type="match status" value="1"/>
</dbReference>
<dbReference type="PANTHER" id="PTHR10458:SF22">
    <property type="entry name" value="PEPTIDE DEFORMYLASE"/>
    <property type="match status" value="1"/>
</dbReference>
<dbReference type="Pfam" id="PF01327">
    <property type="entry name" value="Pep_deformylase"/>
    <property type="match status" value="1"/>
</dbReference>
<dbReference type="PIRSF" id="PIRSF004749">
    <property type="entry name" value="Pep_def"/>
    <property type="match status" value="1"/>
</dbReference>
<dbReference type="PRINTS" id="PR01576">
    <property type="entry name" value="PDEFORMYLASE"/>
</dbReference>
<dbReference type="SUPFAM" id="SSF56420">
    <property type="entry name" value="Peptide deformylase"/>
    <property type="match status" value="1"/>
</dbReference>
<comment type="function">
    <text evidence="1">Removes the formyl group from the N-terminal Met of newly synthesized proteins. Requires at least a dipeptide for an efficient rate of reaction. N-terminal L-methionine is a prerequisite for activity but the enzyme has broad specificity at other positions.</text>
</comment>
<comment type="catalytic activity">
    <reaction evidence="1">
        <text>N-terminal N-formyl-L-methionyl-[peptide] + H2O = N-terminal L-methionyl-[peptide] + formate</text>
        <dbReference type="Rhea" id="RHEA:24420"/>
        <dbReference type="Rhea" id="RHEA-COMP:10639"/>
        <dbReference type="Rhea" id="RHEA-COMP:10640"/>
        <dbReference type="ChEBI" id="CHEBI:15377"/>
        <dbReference type="ChEBI" id="CHEBI:15740"/>
        <dbReference type="ChEBI" id="CHEBI:49298"/>
        <dbReference type="ChEBI" id="CHEBI:64731"/>
        <dbReference type="EC" id="3.5.1.88"/>
    </reaction>
</comment>
<comment type="cofactor">
    <cofactor evidence="1">
        <name>Fe(2+)</name>
        <dbReference type="ChEBI" id="CHEBI:29033"/>
    </cofactor>
    <text evidence="1">Binds 1 Fe(2+) ion.</text>
</comment>
<comment type="similarity">
    <text evidence="1">Belongs to the polypeptide deformylase family.</text>
</comment>
<gene>
    <name evidence="1" type="primary">def</name>
    <name type="ordered locus">WRi_000890</name>
</gene>
<sequence>MSILPIVIAPDERLITRASEVTDINDKIKELVNDMFETMYDAEGLGLAAVQVGVLKRIFVVDVQLETIENEPAGYGSTGKFYMINPEITELSDEQVILKEGCLSIPEQSHEIKRPKYLTVKYKDLDNEEQTLKASGWLARCIQHELDHLNGILYIRHLSKLKYDMAITKAQKIKKQHEQ</sequence>
<reference key="1">
    <citation type="journal article" date="2009" name="Proc. Natl. Acad. Sci. U.S.A.">
        <title>The mosaic genome structure of the Wolbachia wRi strain infecting Drosophila simulans.</title>
        <authorList>
            <person name="Klasson L."/>
            <person name="Westberg J."/>
            <person name="Sapountzis P."/>
            <person name="Naeslund K."/>
            <person name="Lutnaes Y."/>
            <person name="Darby A.C."/>
            <person name="Veneti Z."/>
            <person name="Chen L."/>
            <person name="Braig H.R."/>
            <person name="Garrett R."/>
            <person name="Bourtzis K."/>
            <person name="Andersson S.G."/>
        </authorList>
    </citation>
    <scope>NUCLEOTIDE SEQUENCE [LARGE SCALE GENOMIC DNA]</scope>
    <source>
        <strain>wRi</strain>
    </source>
</reference>